<reference evidence="4" key="1">
    <citation type="submission" date="2019-04" db="EMBL/GenBank/DDBJ databases">
        <authorList>
            <person name="Werner J."/>
        </authorList>
    </citation>
    <scope>NUCLEOTIDE SEQUENCE [LARGE SCALE GENOMIC DNA]</scope>
    <source>
        <strain>JCM 16519 / RA8</strain>
    </source>
</reference>
<reference evidence="5 6" key="2">
    <citation type="journal article" date="2024" name="ACS Chem. Biol.">
        <title>Structure and Substrate Specificity of S-Methyl Thiourocanate Hydratase.</title>
        <authorList>
            <person name="Vasseur C.M."/>
            <person name="Karunasegaram D."/>
            <person name="Seebeck F.P."/>
        </authorList>
    </citation>
    <scope>X-RAY CRYSTALLOGRAPHY (2.00 ANGSTROMS) OF WILD-TYPE AND MUTANT ALA-450 IN COMPLEXES WITH NAD(+)</scope>
    <scope>FUNCTION</scope>
    <scope>CATALYTIC ACTIVITY</scope>
    <scope>COFACTOR</scope>
    <scope>BIOPHYSICOCHEMICAL PROPERTIES</scope>
    <scope>IDENTIFICATION BY MASS SPECTROMETRY</scope>
    <scope>MUTAGENESIS OF ARG-450</scope>
    <source>
        <strain>JCM 16519 / RA8</strain>
    </source>
</reference>
<keyword id="KW-0002">3D-structure</keyword>
<keyword id="KW-0456">Lyase</keyword>
<keyword id="KW-0520">NAD</keyword>
<keyword id="KW-0547">Nucleotide-binding</keyword>
<accession>A0A6P2DXK2</accession>
<sequence>MQAEKTPRNIKAARGTTLRCKGWQQETILRLLENNIENGERPEDLVIYMNAAKAARDWDCFDAIVRTLKTMEADETLVVQSGKPVGLFRTHAFAPRVLLANGNVAGRWAGDANMFELEKRGLTILPGMTAACWQYIGSQGIVQGTYQSFVSAAEQYFGGSLAGRIILTAGAGGMGGAQPLAGKMAGAATLVVDVDPVSLERRLNTGYLDVIATSVDDALARIRTLAAEREGGSVGIVGNAADVFEALHRKELRPDIVTDQCMVDPYRGYVPSGLSPAEAAQLVRTDPEQALALAAATLARHARAMLRFRDDGAVVFEYGNTLRARSVAAGVPEAGELPSFVTLFIRPLFCRGIGPFRWIAASGDPKDIAAIDGIIESTFAEGHMIRQWIPMARKYIQFQGLPARIGWLGHGERSKLALLVNEAVADGRISAPIAFTRDHLDAGSVASPYRETEKMQDGSDAVSDWPLLNAMLACSNGASLVALHSNGDKSASAGQTAIADGTPMAAFKLKSVLDADTGIGVIRYADAGYEVARETRALHGLGIEIGGGE</sequence>
<organism>
    <name type="scientific">Variovorax sp. (strain JCM 16519 / RA8)</name>
    <dbReference type="NCBI Taxonomy" id="662548"/>
    <lineage>
        <taxon>Bacteria</taxon>
        <taxon>Pseudomonadati</taxon>
        <taxon>Pseudomonadota</taxon>
        <taxon>Betaproteobacteria</taxon>
        <taxon>Burkholderiales</taxon>
        <taxon>Comamonadaceae</taxon>
        <taxon>Variovorax</taxon>
    </lineage>
</organism>
<evidence type="ECO:0000269" key="1">
    <source>
    </source>
</evidence>
<evidence type="ECO:0000303" key="2">
    <source>
    </source>
</evidence>
<evidence type="ECO:0000305" key="3"/>
<evidence type="ECO:0000312" key="4">
    <source>
        <dbReference type="EMBL" id="VTU15339.1"/>
    </source>
</evidence>
<evidence type="ECO:0007744" key="5">
    <source>
        <dbReference type="PDB" id="8Q9U"/>
    </source>
</evidence>
<evidence type="ECO:0007744" key="6">
    <source>
        <dbReference type="PDB" id="8Q9V"/>
    </source>
</evidence>
<evidence type="ECO:0007829" key="7">
    <source>
        <dbReference type="PDB" id="8Q9U"/>
    </source>
</evidence>
<evidence type="ECO:0007829" key="8">
    <source>
        <dbReference type="PDB" id="8Q9V"/>
    </source>
</evidence>
<dbReference type="EC" id="4.2.1.-" evidence="1"/>
<dbReference type="EMBL" id="LR594662">
    <property type="protein sequence ID" value="VTU15339.1"/>
    <property type="molecule type" value="Genomic_DNA"/>
</dbReference>
<dbReference type="RefSeq" id="WP_162584910.1">
    <property type="nucleotide sequence ID" value="NZ_LR594662.1"/>
</dbReference>
<dbReference type="PDB" id="8Q9U">
    <property type="method" value="X-ray"/>
    <property type="resolution" value="2.00 A"/>
    <property type="chains" value="A=1-549"/>
</dbReference>
<dbReference type="PDB" id="8Q9V">
    <property type="method" value="X-ray"/>
    <property type="resolution" value="2.20 A"/>
    <property type="chains" value="A=1-549"/>
</dbReference>
<dbReference type="PDBsum" id="8Q9U"/>
<dbReference type="PDBsum" id="8Q9V"/>
<dbReference type="SMR" id="A0A6P2DXK2"/>
<dbReference type="Proteomes" id="UP000464105">
    <property type="component" value="Chromosome"/>
</dbReference>
<dbReference type="GO" id="GO:0000166">
    <property type="term" value="F:nucleotide binding"/>
    <property type="evidence" value="ECO:0007669"/>
    <property type="project" value="UniProtKB-KW"/>
</dbReference>
<dbReference type="GO" id="GO:0016153">
    <property type="term" value="F:urocanate hydratase activity"/>
    <property type="evidence" value="ECO:0007669"/>
    <property type="project" value="UniProtKB-EC"/>
</dbReference>
<dbReference type="GO" id="GO:0019556">
    <property type="term" value="P:L-histidine catabolic process to glutamate and formamide"/>
    <property type="evidence" value="ECO:0007669"/>
    <property type="project" value="UniProtKB-UniPathway"/>
</dbReference>
<dbReference type="GO" id="GO:0019557">
    <property type="term" value="P:L-histidine catabolic process to glutamate and formate"/>
    <property type="evidence" value="ECO:0007669"/>
    <property type="project" value="UniProtKB-UniPathway"/>
</dbReference>
<dbReference type="Gene3D" id="3.40.50.10730">
    <property type="entry name" value="Urocanase like domains"/>
    <property type="match status" value="1"/>
</dbReference>
<dbReference type="Gene3D" id="3.40.1770.10">
    <property type="entry name" value="Urocanase superfamily"/>
    <property type="match status" value="1"/>
</dbReference>
<dbReference type="InterPro" id="IPR023637">
    <property type="entry name" value="Urocanase-like"/>
</dbReference>
<dbReference type="InterPro" id="IPR035401">
    <property type="entry name" value="Urocanase_C"/>
</dbReference>
<dbReference type="InterPro" id="IPR038364">
    <property type="entry name" value="Urocanase_central_sf"/>
</dbReference>
<dbReference type="InterPro" id="IPR023636">
    <property type="entry name" value="Urocanase_CS"/>
</dbReference>
<dbReference type="InterPro" id="IPR035400">
    <property type="entry name" value="Urocanase_N"/>
</dbReference>
<dbReference type="InterPro" id="IPR035085">
    <property type="entry name" value="Urocanase_Rossmann-like"/>
</dbReference>
<dbReference type="InterPro" id="IPR036190">
    <property type="entry name" value="Urocanase_sf"/>
</dbReference>
<dbReference type="NCBIfam" id="TIGR01228">
    <property type="entry name" value="hutU"/>
    <property type="match status" value="1"/>
</dbReference>
<dbReference type="NCBIfam" id="NF003820">
    <property type="entry name" value="PRK05414.1"/>
    <property type="match status" value="1"/>
</dbReference>
<dbReference type="PANTHER" id="PTHR12216">
    <property type="entry name" value="UROCANATE HYDRATASE"/>
    <property type="match status" value="1"/>
</dbReference>
<dbReference type="PANTHER" id="PTHR12216:SF4">
    <property type="entry name" value="UROCANATE HYDRATASE"/>
    <property type="match status" value="1"/>
</dbReference>
<dbReference type="Pfam" id="PF01175">
    <property type="entry name" value="Urocanase"/>
    <property type="match status" value="1"/>
</dbReference>
<dbReference type="Pfam" id="PF17392">
    <property type="entry name" value="Urocanase_C"/>
    <property type="match status" value="1"/>
</dbReference>
<dbReference type="Pfam" id="PF17391">
    <property type="entry name" value="Urocanase_N"/>
    <property type="match status" value="1"/>
</dbReference>
<dbReference type="PIRSF" id="PIRSF001423">
    <property type="entry name" value="Urocanate_hydrat"/>
    <property type="match status" value="1"/>
</dbReference>
<dbReference type="SUPFAM" id="SSF111326">
    <property type="entry name" value="Urocanase"/>
    <property type="match status" value="1"/>
</dbReference>
<dbReference type="PROSITE" id="PS01233">
    <property type="entry name" value="UROCANASE"/>
    <property type="match status" value="1"/>
</dbReference>
<protein>
    <recommendedName>
        <fullName evidence="2">S-methyl thiourocanate hydratase</fullName>
        <shortName evidence="2">S-Me-TUC</shortName>
        <shortName evidence="2">S-methyl TUC</shortName>
        <ecNumber evidence="1">4.2.1.-</ecNumber>
    </recommendedName>
</protein>
<name>SMTUC_VARS8</name>
<proteinExistence type="evidence at protein level"/>
<gene>
    <name evidence="4" type="ORF">RA8CHR_00944</name>
</gene>
<comment type="function">
    <text evidence="1">Hydratase involved in the catabolism of S-methyl ergothioneine (PubMed:38389448). Catalyzes the 1,4-addition of H(2)O to S-methyl thiourocanate, leading to the formation of S-methyl-thiohydantoin-5-propanoate, the second step in S-methyl ergothioneine degradation (PubMed:38389448). Cannot use urocanate or thiourocanate as substrate (PubMed:38389448).</text>
</comment>
<comment type="catalytic activity">
    <reaction evidence="1">
        <text>S-methyl-(E)-thiourocanate + H2O = S-methyl-thiohydantoin-5-propanoate</text>
        <dbReference type="Rhea" id="RHEA:79039"/>
        <dbReference type="ChEBI" id="CHEBI:15377"/>
        <dbReference type="ChEBI" id="CHEBI:229683"/>
        <dbReference type="ChEBI" id="CHEBI:229685"/>
    </reaction>
    <physiologicalReaction direction="left-to-right" evidence="1">
        <dbReference type="Rhea" id="RHEA:79040"/>
    </physiologicalReaction>
</comment>
<comment type="cofactor">
    <cofactor evidence="1">
        <name>NAD(+)</name>
        <dbReference type="ChEBI" id="CHEBI:57540"/>
    </cofactor>
    <text evidence="1">Binds 1 NAD(+) per subunit.</text>
</comment>
<comment type="biophysicochemical properties">
    <kinetics>
        <KM evidence="1">1.1 mM for S-methyl thiourocanate</KM>
        <text evidence="1">kcat is 1.36 sec(-1).</text>
    </kinetics>
</comment>
<comment type="similarity">
    <text evidence="3">Belongs to the urocanase family. S-methyl thiourocanate hydratase subfamily.</text>
</comment>
<feature type="chain" id="PRO_0000461448" description="S-methyl thiourocanate hydratase">
    <location>
        <begin position="1"/>
        <end position="549"/>
    </location>
</feature>
<feature type="binding site" evidence="1 6">
    <location>
        <position position="49"/>
    </location>
    <ligand>
        <name>NAD(+)</name>
        <dbReference type="ChEBI" id="CHEBI:57540"/>
    </ligand>
</feature>
<feature type="binding site" evidence="1 6">
    <location>
        <position position="173"/>
    </location>
    <ligand>
        <name>NAD(+)</name>
        <dbReference type="ChEBI" id="CHEBI:57540"/>
    </ligand>
</feature>
<feature type="binding site" evidence="1 6">
    <location>
        <position position="174"/>
    </location>
    <ligand>
        <name>NAD(+)</name>
        <dbReference type="ChEBI" id="CHEBI:57540"/>
    </ligand>
</feature>
<feature type="binding site" evidence="1 6">
    <location>
        <position position="175"/>
    </location>
    <ligand>
        <name>NAD(+)</name>
        <dbReference type="ChEBI" id="CHEBI:57540"/>
    </ligand>
</feature>
<feature type="binding site" evidence="1 6">
    <location>
        <position position="193"/>
    </location>
    <ligand>
        <name>NAD(+)</name>
        <dbReference type="ChEBI" id="CHEBI:57540"/>
    </ligand>
</feature>
<feature type="binding site" evidence="1 6">
    <location>
        <position position="198"/>
    </location>
    <ligand>
        <name>NAD(+)</name>
        <dbReference type="ChEBI" id="CHEBI:57540"/>
    </ligand>
</feature>
<feature type="binding site" evidence="1 6">
    <location>
        <position position="239"/>
    </location>
    <ligand>
        <name>NAD(+)</name>
        <dbReference type="ChEBI" id="CHEBI:57540"/>
    </ligand>
</feature>
<feature type="binding site" evidence="1 6">
    <location>
        <position position="240"/>
    </location>
    <ligand>
        <name>NAD(+)</name>
        <dbReference type="ChEBI" id="CHEBI:57540"/>
    </ligand>
</feature>
<feature type="binding site" evidence="1 6">
    <location>
        <position position="260"/>
    </location>
    <ligand>
        <name>NAD(+)</name>
        <dbReference type="ChEBI" id="CHEBI:57540"/>
    </ligand>
</feature>
<feature type="binding site" evidence="1 6">
    <location>
        <position position="270"/>
    </location>
    <ligand>
        <name>NAD(+)</name>
        <dbReference type="ChEBI" id="CHEBI:57540"/>
    </ligand>
</feature>
<feature type="binding site" evidence="1 6">
    <location>
        <position position="318"/>
    </location>
    <ligand>
        <name>NAD(+)</name>
        <dbReference type="ChEBI" id="CHEBI:57540"/>
    </ligand>
</feature>
<feature type="mutagenesis site" description="Loss of activity." evidence="1">
    <original>R</original>
    <variation>A</variation>
    <location>
        <position position="450"/>
    </location>
</feature>
<feature type="strand" evidence="7">
    <location>
        <begin position="19"/>
        <end position="22"/>
    </location>
</feature>
<feature type="helix" evidence="7">
    <location>
        <begin position="23"/>
        <end position="37"/>
    </location>
</feature>
<feature type="helix" evidence="7">
    <location>
        <begin position="42"/>
        <end position="44"/>
    </location>
</feature>
<feature type="strand" evidence="7">
    <location>
        <begin position="46"/>
        <end position="48"/>
    </location>
</feature>
<feature type="turn" evidence="7">
    <location>
        <begin position="49"/>
        <end position="51"/>
    </location>
</feature>
<feature type="strand" evidence="7">
    <location>
        <begin position="52"/>
        <end position="57"/>
    </location>
</feature>
<feature type="helix" evidence="7">
    <location>
        <begin position="58"/>
        <end position="70"/>
    </location>
</feature>
<feature type="strand" evidence="7">
    <location>
        <begin position="75"/>
        <end position="80"/>
    </location>
</feature>
<feature type="strand" evidence="7">
    <location>
        <begin position="83"/>
        <end position="89"/>
    </location>
</feature>
<feature type="strand" evidence="7">
    <location>
        <begin position="96"/>
        <end position="102"/>
    </location>
</feature>
<feature type="helix" evidence="7">
    <location>
        <begin position="106"/>
        <end position="108"/>
    </location>
</feature>
<feature type="helix" evidence="7">
    <location>
        <begin position="111"/>
        <end position="119"/>
    </location>
</feature>
<feature type="turn" evidence="7">
    <location>
        <begin position="127"/>
        <end position="133"/>
    </location>
</feature>
<feature type="helix" evidence="7">
    <location>
        <begin position="139"/>
        <end position="156"/>
    </location>
</feature>
<feature type="strand" evidence="7">
    <location>
        <begin position="165"/>
        <end position="169"/>
    </location>
</feature>
<feature type="helix" evidence="7">
    <location>
        <begin position="175"/>
        <end position="177"/>
    </location>
</feature>
<feature type="helix" evidence="7">
    <location>
        <begin position="178"/>
        <end position="184"/>
    </location>
</feature>
<feature type="strand" evidence="7">
    <location>
        <begin position="188"/>
        <end position="194"/>
    </location>
</feature>
<feature type="helix" evidence="7">
    <location>
        <begin position="196"/>
        <end position="204"/>
    </location>
</feature>
<feature type="strand" evidence="7">
    <location>
        <begin position="209"/>
        <end position="211"/>
    </location>
</feature>
<feature type="helix" evidence="7">
    <location>
        <begin position="215"/>
        <end position="228"/>
    </location>
</feature>
<feature type="strand" evidence="7">
    <location>
        <begin position="232"/>
        <end position="238"/>
    </location>
</feature>
<feature type="helix" evidence="7">
    <location>
        <begin position="240"/>
        <end position="249"/>
    </location>
</feature>
<feature type="strand" evidence="7">
    <location>
        <begin position="255"/>
        <end position="257"/>
    </location>
</feature>
<feature type="turn" evidence="7">
    <location>
        <begin position="265"/>
        <end position="267"/>
    </location>
</feature>
<feature type="helix" evidence="7">
    <location>
        <begin position="276"/>
        <end position="285"/>
    </location>
</feature>
<feature type="helix" evidence="7">
    <location>
        <begin position="287"/>
        <end position="310"/>
    </location>
</feature>
<feature type="strand" evidence="8">
    <location>
        <begin position="319"/>
        <end position="321"/>
    </location>
</feature>
<feature type="helix" evidence="7">
    <location>
        <begin position="322"/>
        <end position="328"/>
    </location>
</feature>
<feature type="helix" evidence="7">
    <location>
        <begin position="332"/>
        <end position="336"/>
    </location>
</feature>
<feature type="helix" evidence="7">
    <location>
        <begin position="340"/>
        <end position="343"/>
    </location>
</feature>
<feature type="helix" evidence="7">
    <location>
        <begin position="346"/>
        <end position="350"/>
    </location>
</feature>
<feature type="strand" evidence="7">
    <location>
        <begin position="356"/>
        <end position="360"/>
    </location>
</feature>
<feature type="helix" evidence="7">
    <location>
        <begin position="365"/>
        <end position="378"/>
    </location>
</feature>
<feature type="helix" evidence="7">
    <location>
        <begin position="384"/>
        <end position="395"/>
    </location>
</feature>
<feature type="strand" evidence="7">
    <location>
        <begin position="403"/>
        <end position="405"/>
    </location>
</feature>
<feature type="helix" evidence="7">
    <location>
        <begin position="412"/>
        <end position="425"/>
    </location>
</feature>
<feature type="strand" evidence="7">
    <location>
        <begin position="428"/>
        <end position="431"/>
    </location>
</feature>
<feature type="strand" evidence="7">
    <location>
        <begin position="433"/>
        <end position="437"/>
    </location>
</feature>
<feature type="strand" evidence="7">
    <location>
        <begin position="444"/>
        <end position="446"/>
    </location>
</feature>
<feature type="turn" evidence="7">
    <location>
        <begin position="448"/>
        <end position="454"/>
    </location>
</feature>
<feature type="helix" evidence="7">
    <location>
        <begin position="464"/>
        <end position="476"/>
    </location>
</feature>
<feature type="strand" evidence="7">
    <location>
        <begin position="479"/>
        <end position="486"/>
    </location>
</feature>
<feature type="turn" evidence="7">
    <location>
        <begin position="487"/>
        <end position="489"/>
    </location>
</feature>
<feature type="strand" evidence="7">
    <location>
        <begin position="490"/>
        <end position="499"/>
    </location>
</feature>
<feature type="helix" evidence="7">
    <location>
        <begin position="503"/>
        <end position="527"/>
    </location>
</feature>
<feature type="helix" evidence="7">
    <location>
        <begin position="530"/>
        <end position="538"/>
    </location>
</feature>